<organism>
    <name type="scientific">Cereibacter sphaeroides (strain KD131 / KCTC 12085)</name>
    <name type="common">Rhodobacter sphaeroides</name>
    <dbReference type="NCBI Taxonomy" id="557760"/>
    <lineage>
        <taxon>Bacteria</taxon>
        <taxon>Pseudomonadati</taxon>
        <taxon>Pseudomonadota</taxon>
        <taxon>Alphaproteobacteria</taxon>
        <taxon>Rhodobacterales</taxon>
        <taxon>Paracoccaceae</taxon>
        <taxon>Cereibacter</taxon>
    </lineage>
</organism>
<proteinExistence type="inferred from homology"/>
<accession>B9KRK6</accession>
<sequence>MAFDPASLTFDANGLIPAVAQDHATGEVLMMAWMNAEAVARTLETGRVTYWSRSRQAFWVKGETSGHVQRLIELRIDCDRDCLLLLIEQEGPACHTNRRSCFYTALREGEERIVLDPMV</sequence>
<name>HIS3_CERSK</name>
<keyword id="KW-0028">Amino-acid biosynthesis</keyword>
<keyword id="KW-0963">Cytoplasm</keyword>
<keyword id="KW-0368">Histidine biosynthesis</keyword>
<keyword id="KW-0378">Hydrolase</keyword>
<keyword id="KW-0460">Magnesium</keyword>
<keyword id="KW-0479">Metal-binding</keyword>
<keyword id="KW-0862">Zinc</keyword>
<gene>
    <name evidence="1" type="primary">hisI</name>
    <name type="ordered locus">RSKD131_0938</name>
</gene>
<dbReference type="EC" id="3.5.4.19" evidence="1"/>
<dbReference type="EMBL" id="CP001150">
    <property type="protein sequence ID" value="ACM00798.1"/>
    <property type="molecule type" value="Genomic_DNA"/>
</dbReference>
<dbReference type="RefSeq" id="WP_015920407.1">
    <property type="nucleotide sequence ID" value="NC_011963.1"/>
</dbReference>
<dbReference type="SMR" id="B9KRK6"/>
<dbReference type="GeneID" id="67446377"/>
<dbReference type="KEGG" id="rsk:RSKD131_0938"/>
<dbReference type="HOGENOM" id="CLU_048577_5_3_5"/>
<dbReference type="UniPathway" id="UPA00031">
    <property type="reaction ID" value="UER00008"/>
</dbReference>
<dbReference type="GO" id="GO:0005737">
    <property type="term" value="C:cytoplasm"/>
    <property type="evidence" value="ECO:0007669"/>
    <property type="project" value="UniProtKB-SubCell"/>
</dbReference>
<dbReference type="GO" id="GO:0000287">
    <property type="term" value="F:magnesium ion binding"/>
    <property type="evidence" value="ECO:0007669"/>
    <property type="project" value="UniProtKB-UniRule"/>
</dbReference>
<dbReference type="GO" id="GO:0004635">
    <property type="term" value="F:phosphoribosyl-AMP cyclohydrolase activity"/>
    <property type="evidence" value="ECO:0007669"/>
    <property type="project" value="UniProtKB-UniRule"/>
</dbReference>
<dbReference type="GO" id="GO:0008270">
    <property type="term" value="F:zinc ion binding"/>
    <property type="evidence" value="ECO:0007669"/>
    <property type="project" value="UniProtKB-UniRule"/>
</dbReference>
<dbReference type="GO" id="GO:0000105">
    <property type="term" value="P:L-histidine biosynthetic process"/>
    <property type="evidence" value="ECO:0007669"/>
    <property type="project" value="UniProtKB-UniRule"/>
</dbReference>
<dbReference type="FunFam" id="3.10.20.810:FF:000001">
    <property type="entry name" value="Histidine biosynthesis bifunctional protein HisIE"/>
    <property type="match status" value="1"/>
</dbReference>
<dbReference type="Gene3D" id="3.10.20.810">
    <property type="entry name" value="Phosphoribosyl-AMP cyclohydrolase"/>
    <property type="match status" value="1"/>
</dbReference>
<dbReference type="HAMAP" id="MF_01021">
    <property type="entry name" value="HisI"/>
    <property type="match status" value="1"/>
</dbReference>
<dbReference type="InterPro" id="IPR026660">
    <property type="entry name" value="PRA-CH"/>
</dbReference>
<dbReference type="InterPro" id="IPR002496">
    <property type="entry name" value="PRib_AMP_CycHydrolase_dom"/>
</dbReference>
<dbReference type="InterPro" id="IPR038019">
    <property type="entry name" value="PRib_AMP_CycHydrolase_sf"/>
</dbReference>
<dbReference type="NCBIfam" id="NF000768">
    <property type="entry name" value="PRK00051.1"/>
    <property type="match status" value="1"/>
</dbReference>
<dbReference type="PANTHER" id="PTHR42945">
    <property type="entry name" value="HISTIDINE BIOSYNTHESIS BIFUNCTIONAL PROTEIN"/>
    <property type="match status" value="1"/>
</dbReference>
<dbReference type="PANTHER" id="PTHR42945:SF1">
    <property type="entry name" value="HISTIDINE BIOSYNTHESIS BIFUNCTIONAL PROTEIN HIS7"/>
    <property type="match status" value="1"/>
</dbReference>
<dbReference type="Pfam" id="PF01502">
    <property type="entry name" value="PRA-CH"/>
    <property type="match status" value="1"/>
</dbReference>
<dbReference type="SUPFAM" id="SSF141734">
    <property type="entry name" value="HisI-like"/>
    <property type="match status" value="1"/>
</dbReference>
<protein>
    <recommendedName>
        <fullName evidence="1">Phosphoribosyl-AMP cyclohydrolase</fullName>
        <shortName evidence="1">PRA-CH</shortName>
        <ecNumber evidence="1">3.5.4.19</ecNumber>
    </recommendedName>
</protein>
<comment type="function">
    <text evidence="1">Catalyzes the hydrolysis of the adenine ring of phosphoribosyl-AMP.</text>
</comment>
<comment type="catalytic activity">
    <reaction evidence="1">
        <text>1-(5-phospho-beta-D-ribosyl)-5'-AMP + H2O = 1-(5-phospho-beta-D-ribosyl)-5-[(5-phospho-beta-D-ribosylamino)methylideneamino]imidazole-4-carboxamide</text>
        <dbReference type="Rhea" id="RHEA:20049"/>
        <dbReference type="ChEBI" id="CHEBI:15377"/>
        <dbReference type="ChEBI" id="CHEBI:58435"/>
        <dbReference type="ChEBI" id="CHEBI:59457"/>
        <dbReference type="EC" id="3.5.4.19"/>
    </reaction>
</comment>
<comment type="cofactor">
    <cofactor evidence="1">
        <name>Mg(2+)</name>
        <dbReference type="ChEBI" id="CHEBI:18420"/>
    </cofactor>
    <text evidence="1">Binds 1 Mg(2+) ion per subunit.</text>
</comment>
<comment type="cofactor">
    <cofactor evidence="1">
        <name>Zn(2+)</name>
        <dbReference type="ChEBI" id="CHEBI:29105"/>
    </cofactor>
    <text evidence="1">Binds 1 zinc ion per subunit.</text>
</comment>
<comment type="pathway">
    <text evidence="1">Amino-acid biosynthesis; L-histidine biosynthesis; L-histidine from 5-phospho-alpha-D-ribose 1-diphosphate: step 3/9.</text>
</comment>
<comment type="subunit">
    <text evidence="1">Homodimer.</text>
</comment>
<comment type="subcellular location">
    <subcellularLocation>
        <location evidence="1">Cytoplasm</location>
    </subcellularLocation>
</comment>
<comment type="similarity">
    <text evidence="1">Belongs to the PRA-CH family.</text>
</comment>
<feature type="chain" id="PRO_1000149078" description="Phosphoribosyl-AMP cyclohydrolase">
    <location>
        <begin position="1"/>
        <end position="119"/>
    </location>
</feature>
<feature type="binding site" evidence="1">
    <location>
        <position position="77"/>
    </location>
    <ligand>
        <name>Mg(2+)</name>
        <dbReference type="ChEBI" id="CHEBI:18420"/>
    </ligand>
</feature>
<feature type="binding site" evidence="1">
    <location>
        <position position="78"/>
    </location>
    <ligand>
        <name>Zn(2+)</name>
        <dbReference type="ChEBI" id="CHEBI:29105"/>
        <note>ligand shared between dimeric partners</note>
    </ligand>
</feature>
<feature type="binding site" evidence="1">
    <location>
        <position position="79"/>
    </location>
    <ligand>
        <name>Mg(2+)</name>
        <dbReference type="ChEBI" id="CHEBI:18420"/>
    </ligand>
</feature>
<feature type="binding site" evidence="1">
    <location>
        <position position="81"/>
    </location>
    <ligand>
        <name>Mg(2+)</name>
        <dbReference type="ChEBI" id="CHEBI:18420"/>
    </ligand>
</feature>
<feature type="binding site" evidence="1">
    <location>
        <position position="94"/>
    </location>
    <ligand>
        <name>Zn(2+)</name>
        <dbReference type="ChEBI" id="CHEBI:29105"/>
        <note>ligand shared between dimeric partners</note>
    </ligand>
</feature>
<feature type="binding site" evidence="1">
    <location>
        <position position="101"/>
    </location>
    <ligand>
        <name>Zn(2+)</name>
        <dbReference type="ChEBI" id="CHEBI:29105"/>
        <note>ligand shared between dimeric partners</note>
    </ligand>
</feature>
<reference key="1">
    <citation type="journal article" date="2009" name="J. Bacteriol.">
        <title>Complete genome sequence of Rhodobacter sphaeroides KD131.</title>
        <authorList>
            <person name="Lim S.-K."/>
            <person name="Kim S.J."/>
            <person name="Cha S.H."/>
            <person name="Oh Y.-K."/>
            <person name="Rhee H.-J."/>
            <person name="Kim M.-S."/>
            <person name="Lee J.K."/>
        </authorList>
    </citation>
    <scope>NUCLEOTIDE SEQUENCE [LARGE SCALE GENOMIC DNA]</scope>
    <source>
        <strain>KD131 / KCTC 12085</strain>
    </source>
</reference>
<evidence type="ECO:0000255" key="1">
    <source>
        <dbReference type="HAMAP-Rule" id="MF_01021"/>
    </source>
</evidence>